<organism>
    <name type="scientific">Neisseria meningitidis serogroup C (strain 053442)</name>
    <dbReference type="NCBI Taxonomy" id="374833"/>
    <lineage>
        <taxon>Bacteria</taxon>
        <taxon>Pseudomonadati</taxon>
        <taxon>Pseudomonadota</taxon>
        <taxon>Betaproteobacteria</taxon>
        <taxon>Neisseriales</taxon>
        <taxon>Neisseriaceae</taxon>
        <taxon>Neisseria</taxon>
    </lineage>
</organism>
<dbReference type="EMBL" id="CP000381">
    <property type="protein sequence ID" value="ABX72798.1"/>
    <property type="molecule type" value="Genomic_DNA"/>
</dbReference>
<dbReference type="EMBL" id="CP000381">
    <property type="protein sequence ID" value="ABX73907.1"/>
    <property type="molecule type" value="Genomic_DNA"/>
</dbReference>
<dbReference type="RefSeq" id="WP_012221395.1">
    <property type="nucleotide sequence ID" value="NC_010120.1"/>
</dbReference>
<dbReference type="KEGG" id="nmn:NMCC_0601"/>
<dbReference type="KEGG" id="nmn:NMCC_1766"/>
<dbReference type="HOGENOM" id="CLU_985210_0_0_4"/>
<dbReference type="Proteomes" id="UP000001177">
    <property type="component" value="Chromosome"/>
</dbReference>
<dbReference type="GO" id="GO:0009279">
    <property type="term" value="C:cell outer membrane"/>
    <property type="evidence" value="ECO:0007669"/>
    <property type="project" value="UniProtKB-SubCell"/>
</dbReference>
<dbReference type="GO" id="GO:0007155">
    <property type="term" value="P:cell adhesion"/>
    <property type="evidence" value="ECO:0007669"/>
    <property type="project" value="UniProtKB-KW"/>
</dbReference>
<dbReference type="PROSITE" id="PS51257">
    <property type="entry name" value="PROKAR_LIPOPROTEIN"/>
    <property type="match status" value="1"/>
</dbReference>
<reference key="1">
    <citation type="journal article" date="2008" name="Genomics">
        <title>Characterization of ST-4821 complex, a unique Neisseria meningitidis clone.</title>
        <authorList>
            <person name="Peng J."/>
            <person name="Yang L."/>
            <person name="Yang F."/>
            <person name="Yang J."/>
            <person name="Yan Y."/>
            <person name="Nie H."/>
            <person name="Zhang X."/>
            <person name="Xiong Z."/>
            <person name="Jiang Y."/>
            <person name="Cheng F."/>
            <person name="Xu X."/>
            <person name="Chen S."/>
            <person name="Sun L."/>
            <person name="Li W."/>
            <person name="Shen Y."/>
            <person name="Shao Z."/>
            <person name="Liang X."/>
            <person name="Xu J."/>
            <person name="Jin Q."/>
        </authorList>
    </citation>
    <scope>NUCLEOTIDE SEQUENCE [LARGE SCALE GENOMIC DNA]</scope>
    <source>
        <strain>053442</strain>
    </source>
</reference>
<feature type="signal peptide" evidence="1">
    <location>
        <begin position="1"/>
        <end position="14"/>
    </location>
</feature>
<feature type="chain" id="PRO_0000344488" description="Adhesin MafA 1/2">
    <location>
        <begin position="15"/>
        <end position="313"/>
    </location>
</feature>
<feature type="region of interest" description="Disordered" evidence="2">
    <location>
        <begin position="282"/>
        <end position="313"/>
    </location>
</feature>
<feature type="compositionally biased region" description="Polar residues" evidence="2">
    <location>
        <begin position="282"/>
        <end position="298"/>
    </location>
</feature>
<feature type="lipid moiety-binding region" description="N-palmitoyl cysteine" evidence="1">
    <location>
        <position position="15"/>
    </location>
</feature>
<feature type="lipid moiety-binding region" description="S-diacylglycerol cysteine" evidence="1">
    <location>
        <position position="15"/>
    </location>
</feature>
<sequence>MKTLLLLIPLVLTACGTLTGIPAHGGGKRFAVEQELVAASSRAAVKEMDLSALKGRKAALYVSVMGDQGSGNISGGRYSIDALIRGGYHNNPESATQYSYPAYDTTATTKADALSSVTTSTSLLNAPAAALTKNSGRKGERSAGLSVNGTGDYRNETLLANPRDVSFLTNLIQTVFYLRGIEVVPPEYADTDVFVTVDVFGIVRSRTELHLYNAETLKAQTKLEYFAVDRDSRKLLIAPKTAAYESQYQEQYALWMGPYSVGKTVKASDRLMVDFSDITPYGDTTAQNRPDFKQNNGKNPDVGNEVIRRRKGG</sequence>
<protein>
    <recommendedName>
        <fullName>Adhesin MafA 1/2</fullName>
    </recommendedName>
</protein>
<gene>
    <name type="primary">mafA1</name>
    <name type="ordered locus">NMCC_0601</name>
</gene>
<gene>
    <name type="primary">mafA2</name>
    <name type="ordered locus">NMCC_1766</name>
</gene>
<keyword id="KW-0130">Cell adhesion</keyword>
<keyword id="KW-0998">Cell outer membrane</keyword>
<keyword id="KW-0449">Lipoprotein</keyword>
<keyword id="KW-0472">Membrane</keyword>
<keyword id="KW-0564">Palmitate</keyword>
<keyword id="KW-0732">Signal</keyword>
<keyword id="KW-0843">Virulence</keyword>
<evidence type="ECO:0000255" key="1">
    <source>
        <dbReference type="PROSITE-ProRule" id="PRU00303"/>
    </source>
</evidence>
<evidence type="ECO:0000256" key="2">
    <source>
        <dbReference type="SAM" id="MobiDB-lite"/>
    </source>
</evidence>
<evidence type="ECO:0000305" key="3"/>
<name>MAFA1_NEIM0</name>
<accession>A9M2L5</accession>
<proteinExistence type="inferred from homology"/>
<comment type="subcellular location">
    <subcellularLocation>
        <location evidence="3">Cell outer membrane</location>
        <topology evidence="1">Lipid-anchor</topology>
    </subcellularLocation>
</comment>
<comment type="similarity">
    <text evidence="3">Belongs to the MafA family.</text>
</comment>